<evidence type="ECO:0000255" key="1">
    <source>
        <dbReference type="HAMAP-Rule" id="MF_00740"/>
    </source>
</evidence>
<accession>A9N7E1</accession>
<reference key="1">
    <citation type="submission" date="2007-11" db="EMBL/GenBank/DDBJ databases">
        <authorList>
            <consortium name="The Salmonella enterica serovar Paratyphi B Genome Sequencing Project"/>
            <person name="McClelland M."/>
            <person name="Sanderson E.K."/>
            <person name="Porwollik S."/>
            <person name="Spieth J."/>
            <person name="Clifton W.S."/>
            <person name="Fulton R."/>
            <person name="Cordes M."/>
            <person name="Wollam A."/>
            <person name="Shah N."/>
            <person name="Pepin K."/>
            <person name="Bhonagiri V."/>
            <person name="Nash W."/>
            <person name="Johnson M."/>
            <person name="Thiruvilangam P."/>
            <person name="Wilson R."/>
        </authorList>
    </citation>
    <scope>NUCLEOTIDE SEQUENCE [LARGE SCALE GENOMIC DNA]</scope>
    <source>
        <strain>ATCC BAA-1250 / SPB7</strain>
    </source>
</reference>
<gene>
    <name evidence="1" type="primary">deoB</name>
    <name type="ordered locus">SPAB_05749</name>
</gene>
<sequence>MKRAFIMVLDSFGIGATEDADRFGDVGSDTLGHIAEACAKGEADNGRKGPLNLPNLTRLGLVKAHEGSTGKIAAGMDGNADVIGAYAWAHELSSGKDTPSGHWEIAGVPVLFDWGYFSDHENSFPQELLDKLVKRANLPGYLGNCHSSGTVILDQLGEEHMKTGKPIFYTSADSVFQIACHEETFGLDKLYELCEIAREELTEGGYNIGRVIARPFIGDKAGNFQRTGNRHDLAVEPPAPTVLQKLVDEKQGHVVSVGKIADIYANCGITKKVKATGLDALFDATLKEMKEAGDKTIVFTNFVDFDSSWGHRRDIAGYAAGLELFDRRLPELMELVGEDDILILTADHGCDPSWTGTDHTREHIPVLIYGPKVKPGSLGHRETFADIGQTLATYFGTSPMDYGKNML</sequence>
<feature type="chain" id="PRO_1000083439" description="Phosphopentomutase">
    <location>
        <begin position="1"/>
        <end position="407"/>
    </location>
</feature>
<feature type="binding site" evidence="1">
    <location>
        <position position="10"/>
    </location>
    <ligand>
        <name>Mn(2+)</name>
        <dbReference type="ChEBI" id="CHEBI:29035"/>
        <label>1</label>
    </ligand>
</feature>
<feature type="binding site" evidence="1">
    <location>
        <position position="306"/>
    </location>
    <ligand>
        <name>Mn(2+)</name>
        <dbReference type="ChEBI" id="CHEBI:29035"/>
        <label>2</label>
    </ligand>
</feature>
<feature type="binding site" evidence="1">
    <location>
        <position position="311"/>
    </location>
    <ligand>
        <name>Mn(2+)</name>
        <dbReference type="ChEBI" id="CHEBI:29035"/>
        <label>2</label>
    </ligand>
</feature>
<feature type="binding site" evidence="1">
    <location>
        <position position="347"/>
    </location>
    <ligand>
        <name>Mn(2+)</name>
        <dbReference type="ChEBI" id="CHEBI:29035"/>
        <label>1</label>
    </ligand>
</feature>
<feature type="binding site" evidence="1">
    <location>
        <position position="348"/>
    </location>
    <ligand>
        <name>Mn(2+)</name>
        <dbReference type="ChEBI" id="CHEBI:29035"/>
        <label>1</label>
    </ligand>
</feature>
<feature type="binding site" evidence="1">
    <location>
        <position position="359"/>
    </location>
    <ligand>
        <name>Mn(2+)</name>
        <dbReference type="ChEBI" id="CHEBI:29035"/>
        <label>2</label>
    </ligand>
</feature>
<dbReference type="EC" id="5.4.2.7" evidence="1"/>
<dbReference type="EMBL" id="CP000886">
    <property type="protein sequence ID" value="ABX71014.1"/>
    <property type="molecule type" value="Genomic_DNA"/>
</dbReference>
<dbReference type="RefSeq" id="WP_000816454.1">
    <property type="nucleotide sequence ID" value="NC_010102.1"/>
</dbReference>
<dbReference type="SMR" id="A9N7E1"/>
<dbReference type="KEGG" id="spq:SPAB_05749"/>
<dbReference type="PATRIC" id="fig|1016998.12.peg.5386"/>
<dbReference type="HOGENOM" id="CLU_053861_0_0_6"/>
<dbReference type="BioCyc" id="SENT1016998:SPAB_RS23460-MONOMER"/>
<dbReference type="UniPathway" id="UPA00002">
    <property type="reaction ID" value="UER00467"/>
</dbReference>
<dbReference type="Proteomes" id="UP000008556">
    <property type="component" value="Chromosome"/>
</dbReference>
<dbReference type="GO" id="GO:0005829">
    <property type="term" value="C:cytosol"/>
    <property type="evidence" value="ECO:0007669"/>
    <property type="project" value="TreeGrafter"/>
</dbReference>
<dbReference type="GO" id="GO:0000287">
    <property type="term" value="F:magnesium ion binding"/>
    <property type="evidence" value="ECO:0007669"/>
    <property type="project" value="InterPro"/>
</dbReference>
<dbReference type="GO" id="GO:0030145">
    <property type="term" value="F:manganese ion binding"/>
    <property type="evidence" value="ECO:0007669"/>
    <property type="project" value="UniProtKB-UniRule"/>
</dbReference>
<dbReference type="GO" id="GO:0008973">
    <property type="term" value="F:phosphopentomutase activity"/>
    <property type="evidence" value="ECO:0007669"/>
    <property type="project" value="UniProtKB-UniRule"/>
</dbReference>
<dbReference type="GO" id="GO:0006018">
    <property type="term" value="P:2-deoxyribose 1-phosphate catabolic process"/>
    <property type="evidence" value="ECO:0007669"/>
    <property type="project" value="UniProtKB-UniRule"/>
</dbReference>
<dbReference type="GO" id="GO:0006015">
    <property type="term" value="P:5-phosphoribose 1-diphosphate biosynthetic process"/>
    <property type="evidence" value="ECO:0007669"/>
    <property type="project" value="UniProtKB-UniPathway"/>
</dbReference>
<dbReference type="GO" id="GO:0043094">
    <property type="term" value="P:metabolic compound salvage"/>
    <property type="evidence" value="ECO:0007669"/>
    <property type="project" value="InterPro"/>
</dbReference>
<dbReference type="GO" id="GO:0009117">
    <property type="term" value="P:nucleotide metabolic process"/>
    <property type="evidence" value="ECO:0007669"/>
    <property type="project" value="InterPro"/>
</dbReference>
<dbReference type="CDD" id="cd16009">
    <property type="entry name" value="PPM"/>
    <property type="match status" value="1"/>
</dbReference>
<dbReference type="FunFam" id="3.30.70.1250:FF:000001">
    <property type="entry name" value="Phosphopentomutase"/>
    <property type="match status" value="1"/>
</dbReference>
<dbReference type="Gene3D" id="3.40.720.10">
    <property type="entry name" value="Alkaline Phosphatase, subunit A"/>
    <property type="match status" value="1"/>
</dbReference>
<dbReference type="Gene3D" id="3.30.70.1250">
    <property type="entry name" value="Phosphopentomutase"/>
    <property type="match status" value="1"/>
</dbReference>
<dbReference type="HAMAP" id="MF_00740">
    <property type="entry name" value="Phosphopentomut"/>
    <property type="match status" value="1"/>
</dbReference>
<dbReference type="InterPro" id="IPR017850">
    <property type="entry name" value="Alkaline_phosphatase_core_sf"/>
</dbReference>
<dbReference type="InterPro" id="IPR010045">
    <property type="entry name" value="DeoB"/>
</dbReference>
<dbReference type="InterPro" id="IPR006124">
    <property type="entry name" value="Metalloenzyme"/>
</dbReference>
<dbReference type="InterPro" id="IPR024052">
    <property type="entry name" value="Phosphopentomutase_DeoB_cap_sf"/>
</dbReference>
<dbReference type="NCBIfam" id="TIGR01696">
    <property type="entry name" value="deoB"/>
    <property type="match status" value="1"/>
</dbReference>
<dbReference type="NCBIfam" id="NF003766">
    <property type="entry name" value="PRK05362.1"/>
    <property type="match status" value="1"/>
</dbReference>
<dbReference type="PANTHER" id="PTHR21110">
    <property type="entry name" value="PHOSPHOPENTOMUTASE"/>
    <property type="match status" value="1"/>
</dbReference>
<dbReference type="PANTHER" id="PTHR21110:SF0">
    <property type="entry name" value="PHOSPHOPENTOMUTASE"/>
    <property type="match status" value="1"/>
</dbReference>
<dbReference type="Pfam" id="PF01676">
    <property type="entry name" value="Metalloenzyme"/>
    <property type="match status" value="1"/>
</dbReference>
<dbReference type="PIRSF" id="PIRSF001491">
    <property type="entry name" value="Ppentomutase"/>
    <property type="match status" value="1"/>
</dbReference>
<dbReference type="SUPFAM" id="SSF53649">
    <property type="entry name" value="Alkaline phosphatase-like"/>
    <property type="match status" value="1"/>
</dbReference>
<dbReference type="SUPFAM" id="SSF143856">
    <property type="entry name" value="DeoB insert domain-like"/>
    <property type="match status" value="1"/>
</dbReference>
<comment type="function">
    <text evidence="1">Isomerase that catalyzes the conversion of deoxy-ribose 1-phosphate (dRib-1-P) and ribose 1-phosphate (Rib-1-P) to deoxy-ribose 5-phosphate (dRib-5-P) and ribose 5-phosphate (Rib-5-P), respectively.</text>
</comment>
<comment type="catalytic activity">
    <reaction evidence="1">
        <text>2-deoxy-alpha-D-ribose 1-phosphate = 2-deoxy-D-ribose 5-phosphate</text>
        <dbReference type="Rhea" id="RHEA:27658"/>
        <dbReference type="ChEBI" id="CHEBI:57259"/>
        <dbReference type="ChEBI" id="CHEBI:62877"/>
        <dbReference type="EC" id="5.4.2.7"/>
    </reaction>
</comment>
<comment type="catalytic activity">
    <reaction evidence="1">
        <text>alpha-D-ribose 1-phosphate = D-ribose 5-phosphate</text>
        <dbReference type="Rhea" id="RHEA:18793"/>
        <dbReference type="ChEBI" id="CHEBI:57720"/>
        <dbReference type="ChEBI" id="CHEBI:78346"/>
        <dbReference type="EC" id="5.4.2.7"/>
    </reaction>
</comment>
<comment type="cofactor">
    <cofactor evidence="1">
        <name>Mn(2+)</name>
        <dbReference type="ChEBI" id="CHEBI:29035"/>
    </cofactor>
    <text evidence="1">Binds 2 manganese ions.</text>
</comment>
<comment type="pathway">
    <text evidence="1">Carbohydrate degradation; 2-deoxy-D-ribose 1-phosphate degradation; D-glyceraldehyde 3-phosphate and acetaldehyde from 2-deoxy-alpha-D-ribose 1-phosphate: step 1/2.</text>
</comment>
<comment type="subcellular location">
    <subcellularLocation>
        <location evidence="1">Cytoplasm</location>
    </subcellularLocation>
</comment>
<comment type="similarity">
    <text evidence="1">Belongs to the phosphopentomutase family.</text>
</comment>
<keyword id="KW-0963">Cytoplasm</keyword>
<keyword id="KW-0413">Isomerase</keyword>
<keyword id="KW-0464">Manganese</keyword>
<keyword id="KW-0479">Metal-binding</keyword>
<name>DEOB_SALPB</name>
<protein>
    <recommendedName>
        <fullName evidence="1">Phosphopentomutase</fullName>
        <ecNumber evidence="1">5.4.2.7</ecNumber>
    </recommendedName>
    <alternativeName>
        <fullName evidence="1">Phosphodeoxyribomutase</fullName>
    </alternativeName>
</protein>
<proteinExistence type="inferred from homology"/>
<organism>
    <name type="scientific">Salmonella paratyphi B (strain ATCC BAA-1250 / SPB7)</name>
    <dbReference type="NCBI Taxonomy" id="1016998"/>
    <lineage>
        <taxon>Bacteria</taxon>
        <taxon>Pseudomonadati</taxon>
        <taxon>Pseudomonadota</taxon>
        <taxon>Gammaproteobacteria</taxon>
        <taxon>Enterobacterales</taxon>
        <taxon>Enterobacteriaceae</taxon>
        <taxon>Salmonella</taxon>
    </lineage>
</organism>